<gene>
    <name evidence="1" type="primary">rimK</name>
    <name type="ordered locus">VC0395_A1871</name>
    <name type="ordered locus">VC395_2397</name>
</gene>
<sequence>MKIGILSRNASLYSTKRLIEACKQRGHEVRVIDALRCYMNINSDKPEIHYKGEELAGFDAVIPRIGASVTFYGTAVLRQFEMMGVYPANESVAITRSRDKLRSMQLLSRRGIGMPITGFASKPDDVKDLLDMVGGAPVVIKLLEGTQGIGVVLAETRTAAESVIEAFMGLKANIMVQEYIKEAGGADIRCFVIGDKVIAAMKRQGADGEFRSNLHRGGTASLVKITPQERKTAIEAAKIMGLNVAGVDLLRSARGPLVMEVNSSPGLEGIEAATGKDIAGMIVEFIEKNAASKRTKTRGKG</sequence>
<accession>A5F5Z2</accession>
<accession>C3M3N8</accession>
<feature type="chain" id="PRO_1000073566" description="Probable alpha-L-glutamate ligase">
    <location>
        <begin position="1"/>
        <end position="301"/>
    </location>
</feature>
<feature type="domain" description="ATP-grasp" evidence="1">
    <location>
        <begin position="104"/>
        <end position="287"/>
    </location>
</feature>
<feature type="binding site" evidence="1">
    <location>
        <position position="141"/>
    </location>
    <ligand>
        <name>ATP</name>
        <dbReference type="ChEBI" id="CHEBI:30616"/>
    </ligand>
</feature>
<feature type="binding site" evidence="1">
    <location>
        <begin position="178"/>
        <end position="179"/>
    </location>
    <ligand>
        <name>ATP</name>
        <dbReference type="ChEBI" id="CHEBI:30616"/>
    </ligand>
</feature>
<feature type="binding site" evidence="1">
    <location>
        <position position="187"/>
    </location>
    <ligand>
        <name>ATP</name>
        <dbReference type="ChEBI" id="CHEBI:30616"/>
    </ligand>
</feature>
<feature type="binding site" evidence="1">
    <location>
        <begin position="211"/>
        <end position="213"/>
    </location>
    <ligand>
        <name>ATP</name>
        <dbReference type="ChEBI" id="CHEBI:30616"/>
    </ligand>
</feature>
<feature type="binding site" evidence="1">
    <location>
        <position position="248"/>
    </location>
    <ligand>
        <name>Mg(2+)</name>
        <dbReference type="ChEBI" id="CHEBI:18420"/>
        <label>1</label>
    </ligand>
</feature>
<feature type="binding site" evidence="1">
    <location>
        <position position="248"/>
    </location>
    <ligand>
        <name>Mn(2+)</name>
        <dbReference type="ChEBI" id="CHEBI:29035"/>
        <label>1</label>
    </ligand>
</feature>
<feature type="binding site" evidence="1">
    <location>
        <position position="260"/>
    </location>
    <ligand>
        <name>Mg(2+)</name>
        <dbReference type="ChEBI" id="CHEBI:18420"/>
        <label>1</label>
    </ligand>
</feature>
<feature type="binding site" evidence="1">
    <location>
        <position position="260"/>
    </location>
    <ligand>
        <name>Mg(2+)</name>
        <dbReference type="ChEBI" id="CHEBI:18420"/>
        <label>2</label>
    </ligand>
</feature>
<feature type="binding site" evidence="1">
    <location>
        <position position="260"/>
    </location>
    <ligand>
        <name>Mn(2+)</name>
        <dbReference type="ChEBI" id="CHEBI:29035"/>
        <label>1</label>
    </ligand>
</feature>
<feature type="binding site" evidence="1">
    <location>
        <position position="260"/>
    </location>
    <ligand>
        <name>Mn(2+)</name>
        <dbReference type="ChEBI" id="CHEBI:29035"/>
        <label>2</label>
    </ligand>
</feature>
<feature type="binding site" evidence="1">
    <location>
        <position position="262"/>
    </location>
    <ligand>
        <name>Mg(2+)</name>
        <dbReference type="ChEBI" id="CHEBI:18420"/>
        <label>2</label>
    </ligand>
</feature>
<feature type="binding site" evidence="1">
    <location>
        <position position="262"/>
    </location>
    <ligand>
        <name>Mn(2+)</name>
        <dbReference type="ChEBI" id="CHEBI:29035"/>
        <label>2</label>
    </ligand>
</feature>
<name>RIMK_VIBC3</name>
<organism>
    <name type="scientific">Vibrio cholerae serotype O1 (strain ATCC 39541 / Classical Ogawa 395 / O395)</name>
    <dbReference type="NCBI Taxonomy" id="345073"/>
    <lineage>
        <taxon>Bacteria</taxon>
        <taxon>Pseudomonadati</taxon>
        <taxon>Pseudomonadota</taxon>
        <taxon>Gammaproteobacteria</taxon>
        <taxon>Vibrionales</taxon>
        <taxon>Vibrionaceae</taxon>
        <taxon>Vibrio</taxon>
    </lineage>
</organism>
<dbReference type="EC" id="6.3.2.-" evidence="1"/>
<dbReference type="EMBL" id="CP000627">
    <property type="protein sequence ID" value="ABQ22059.1"/>
    <property type="molecule type" value="Genomic_DNA"/>
</dbReference>
<dbReference type="EMBL" id="CP001235">
    <property type="protein sequence ID" value="ACP10387.1"/>
    <property type="molecule type" value="Genomic_DNA"/>
</dbReference>
<dbReference type="RefSeq" id="WP_000689982.1">
    <property type="nucleotide sequence ID" value="NZ_JAACZH010000008.1"/>
</dbReference>
<dbReference type="SMR" id="A5F5Z2"/>
<dbReference type="GeneID" id="89513725"/>
<dbReference type="KEGG" id="vco:VC0395_A1871"/>
<dbReference type="KEGG" id="vcr:VC395_2397"/>
<dbReference type="PATRIC" id="fig|345073.21.peg.2311"/>
<dbReference type="eggNOG" id="COG0189">
    <property type="taxonomic scope" value="Bacteria"/>
</dbReference>
<dbReference type="HOGENOM" id="CLU_054353_0_1_6"/>
<dbReference type="OrthoDB" id="3865600at2"/>
<dbReference type="Proteomes" id="UP000000249">
    <property type="component" value="Chromosome 2"/>
</dbReference>
<dbReference type="GO" id="GO:0005737">
    <property type="term" value="C:cytoplasm"/>
    <property type="evidence" value="ECO:0007669"/>
    <property type="project" value="TreeGrafter"/>
</dbReference>
<dbReference type="GO" id="GO:0005524">
    <property type="term" value="F:ATP binding"/>
    <property type="evidence" value="ECO:0007669"/>
    <property type="project" value="UniProtKB-UniRule"/>
</dbReference>
<dbReference type="GO" id="GO:0046872">
    <property type="term" value="F:metal ion binding"/>
    <property type="evidence" value="ECO:0007669"/>
    <property type="project" value="UniProtKB-KW"/>
</dbReference>
<dbReference type="GO" id="GO:0018169">
    <property type="term" value="F:ribosomal S6-glutamic acid ligase activity"/>
    <property type="evidence" value="ECO:0007669"/>
    <property type="project" value="TreeGrafter"/>
</dbReference>
<dbReference type="GO" id="GO:0036211">
    <property type="term" value="P:protein modification process"/>
    <property type="evidence" value="ECO:0007669"/>
    <property type="project" value="InterPro"/>
</dbReference>
<dbReference type="GO" id="GO:0009432">
    <property type="term" value="P:SOS response"/>
    <property type="evidence" value="ECO:0007669"/>
    <property type="project" value="TreeGrafter"/>
</dbReference>
<dbReference type="GO" id="GO:0006412">
    <property type="term" value="P:translation"/>
    <property type="evidence" value="ECO:0007669"/>
    <property type="project" value="UniProtKB-KW"/>
</dbReference>
<dbReference type="FunFam" id="3.40.50.20:FF:000004">
    <property type="entry name" value="Probable alpha-L-glutamate ligase"/>
    <property type="match status" value="1"/>
</dbReference>
<dbReference type="FunFam" id="3.30.1490.20:FF:000005">
    <property type="entry name" value="Probable alpha-L-glutamate ligase 1"/>
    <property type="match status" value="1"/>
</dbReference>
<dbReference type="FunFam" id="3.30.470.20:FF:000016">
    <property type="entry name" value="Ribosomal protein S6--L-glutamate ligase"/>
    <property type="match status" value="1"/>
</dbReference>
<dbReference type="Gene3D" id="3.40.50.20">
    <property type="match status" value="1"/>
</dbReference>
<dbReference type="Gene3D" id="3.30.1490.20">
    <property type="entry name" value="ATP-grasp fold, A domain"/>
    <property type="match status" value="1"/>
</dbReference>
<dbReference type="Gene3D" id="3.30.470.20">
    <property type="entry name" value="ATP-grasp fold, B domain"/>
    <property type="match status" value="1"/>
</dbReference>
<dbReference type="HAMAP" id="MF_01552">
    <property type="entry name" value="RimK"/>
    <property type="match status" value="1"/>
</dbReference>
<dbReference type="InterPro" id="IPR011761">
    <property type="entry name" value="ATP-grasp"/>
</dbReference>
<dbReference type="InterPro" id="IPR013651">
    <property type="entry name" value="ATP-grasp_RimK-type"/>
</dbReference>
<dbReference type="InterPro" id="IPR013815">
    <property type="entry name" value="ATP_grasp_subdomain_1"/>
</dbReference>
<dbReference type="InterPro" id="IPR023533">
    <property type="entry name" value="RimK"/>
</dbReference>
<dbReference type="InterPro" id="IPR041107">
    <property type="entry name" value="Rimk_N"/>
</dbReference>
<dbReference type="InterPro" id="IPR004666">
    <property type="entry name" value="Rp_bS6_RimK/Lys_biosynth_LsyX"/>
</dbReference>
<dbReference type="NCBIfam" id="NF007764">
    <property type="entry name" value="PRK10446.1"/>
    <property type="match status" value="1"/>
</dbReference>
<dbReference type="NCBIfam" id="TIGR00768">
    <property type="entry name" value="rimK_fam"/>
    <property type="match status" value="1"/>
</dbReference>
<dbReference type="PANTHER" id="PTHR21621:SF7">
    <property type="entry name" value="RIBOSOMAL PROTEIN BS6--L-GLUTAMATE LIGASE"/>
    <property type="match status" value="1"/>
</dbReference>
<dbReference type="PANTHER" id="PTHR21621">
    <property type="entry name" value="RIBOSOMAL PROTEIN S6 MODIFICATION PROTEIN"/>
    <property type="match status" value="1"/>
</dbReference>
<dbReference type="Pfam" id="PF08443">
    <property type="entry name" value="RimK"/>
    <property type="match status" value="1"/>
</dbReference>
<dbReference type="Pfam" id="PF18030">
    <property type="entry name" value="Rimk_N"/>
    <property type="match status" value="1"/>
</dbReference>
<dbReference type="SUPFAM" id="SSF56059">
    <property type="entry name" value="Glutathione synthetase ATP-binding domain-like"/>
    <property type="match status" value="1"/>
</dbReference>
<dbReference type="PROSITE" id="PS50975">
    <property type="entry name" value="ATP_GRASP"/>
    <property type="match status" value="1"/>
</dbReference>
<keyword id="KW-0067">ATP-binding</keyword>
<keyword id="KW-0436">Ligase</keyword>
<keyword id="KW-0460">Magnesium</keyword>
<keyword id="KW-0464">Manganese</keyword>
<keyword id="KW-0479">Metal-binding</keyword>
<keyword id="KW-0547">Nucleotide-binding</keyword>
<keyword id="KW-0648">Protein biosynthesis</keyword>
<proteinExistence type="inferred from homology"/>
<comment type="cofactor">
    <cofactor evidence="1">
        <name>Mg(2+)</name>
        <dbReference type="ChEBI" id="CHEBI:18420"/>
    </cofactor>
    <cofactor evidence="1">
        <name>Mn(2+)</name>
        <dbReference type="ChEBI" id="CHEBI:29035"/>
    </cofactor>
    <text evidence="1">Binds 2 magnesium or manganese ions per subunit.</text>
</comment>
<comment type="similarity">
    <text evidence="1">Belongs to the RimK family.</text>
</comment>
<evidence type="ECO:0000255" key="1">
    <source>
        <dbReference type="HAMAP-Rule" id="MF_01552"/>
    </source>
</evidence>
<protein>
    <recommendedName>
        <fullName evidence="1">Probable alpha-L-glutamate ligase</fullName>
        <ecNumber evidence="1">6.3.2.-</ecNumber>
    </recommendedName>
</protein>
<reference key="1">
    <citation type="submission" date="2007-03" db="EMBL/GenBank/DDBJ databases">
        <authorList>
            <person name="Heidelberg J."/>
        </authorList>
    </citation>
    <scope>NUCLEOTIDE SEQUENCE [LARGE SCALE GENOMIC DNA]</scope>
    <source>
        <strain>ATCC 39541 / Classical Ogawa 395 / O395</strain>
    </source>
</reference>
<reference key="2">
    <citation type="journal article" date="2008" name="PLoS ONE">
        <title>A recalibrated molecular clock and independent origins for the cholera pandemic clones.</title>
        <authorList>
            <person name="Feng L."/>
            <person name="Reeves P.R."/>
            <person name="Lan R."/>
            <person name="Ren Y."/>
            <person name="Gao C."/>
            <person name="Zhou Z."/>
            <person name="Ren Y."/>
            <person name="Cheng J."/>
            <person name="Wang W."/>
            <person name="Wang J."/>
            <person name="Qian W."/>
            <person name="Li D."/>
            <person name="Wang L."/>
        </authorList>
    </citation>
    <scope>NUCLEOTIDE SEQUENCE [LARGE SCALE GENOMIC DNA]</scope>
    <source>
        <strain>ATCC 39541 / Classical Ogawa 395 / O395</strain>
    </source>
</reference>